<gene>
    <name type="primary">dmaW2</name>
    <name type="synonym">cpd2</name>
    <name type="ORF">CPUR_04105</name>
</gene>
<proteinExistence type="inferred from homology"/>
<name>DMAW2_CLAP2</name>
<feature type="chain" id="PRO_0000181365" description="Tryptophan dimethylallyltransferase 2">
    <location>
        <begin position="1"/>
        <end position="448"/>
    </location>
</feature>
<feature type="binding site" evidence="2">
    <location>
        <begin position="80"/>
        <end position="81"/>
    </location>
    <ligand>
        <name>L-tryptophan</name>
        <dbReference type="ChEBI" id="CHEBI:57912"/>
    </ligand>
</feature>
<feature type="binding site" evidence="2">
    <location>
        <position position="89"/>
    </location>
    <ligand>
        <name>L-tryptophan</name>
        <dbReference type="ChEBI" id="CHEBI:57912"/>
    </ligand>
</feature>
<feature type="binding site" evidence="2">
    <location>
        <position position="100"/>
    </location>
    <ligand>
        <name>substrate</name>
    </ligand>
</feature>
<feature type="binding site" evidence="2">
    <location>
        <position position="186"/>
    </location>
    <ligand>
        <name>substrate</name>
    </ligand>
</feature>
<feature type="binding site" evidence="2">
    <location>
        <position position="188"/>
    </location>
    <ligand>
        <name>substrate</name>
    </ligand>
</feature>
<feature type="binding site" evidence="2">
    <location>
        <position position="190"/>
    </location>
    <ligand>
        <name>L-tryptophan</name>
        <dbReference type="ChEBI" id="CHEBI:57912"/>
    </ligand>
</feature>
<feature type="binding site" evidence="2">
    <location>
        <position position="249"/>
    </location>
    <ligand>
        <name>L-tryptophan</name>
        <dbReference type="ChEBI" id="CHEBI:57912"/>
    </ligand>
</feature>
<feature type="binding site" evidence="2">
    <location>
        <position position="262"/>
    </location>
    <ligand>
        <name>substrate</name>
    </ligand>
</feature>
<feature type="binding site" evidence="2">
    <location>
        <position position="264"/>
    </location>
    <ligand>
        <name>substrate</name>
    </ligand>
</feature>
<feature type="binding site" evidence="2">
    <location>
        <position position="266"/>
    </location>
    <ligand>
        <name>substrate</name>
    </ligand>
</feature>
<feature type="binding site" evidence="2">
    <location>
        <position position="348"/>
    </location>
    <ligand>
        <name>substrate</name>
    </ligand>
</feature>
<feature type="binding site" evidence="2">
    <location>
        <position position="350"/>
    </location>
    <ligand>
        <name>substrate</name>
    </ligand>
</feature>
<feature type="binding site" evidence="2">
    <location>
        <position position="414"/>
    </location>
    <ligand>
        <name>substrate</name>
    </ligand>
</feature>
<feature type="binding site" evidence="2">
    <location>
        <position position="418"/>
    </location>
    <ligand>
        <name>substrate</name>
    </ligand>
</feature>
<comment type="function">
    <text evidence="1">Catalyzes the first step of ergot alkaloid biosynthesis. Ergot alkaloids, which are produced by endophyte fungi, can enhance plant host fitness, but also cause livestock toxicosis to host plants (By similarity).</text>
</comment>
<comment type="catalytic activity">
    <reaction>
        <text>L-tryptophan + dimethylallyl diphosphate = 4-(3-methylbut-2-enyl)-L-tryptophan + diphosphate</text>
        <dbReference type="Rhea" id="RHEA:14173"/>
        <dbReference type="ChEBI" id="CHEBI:33019"/>
        <dbReference type="ChEBI" id="CHEBI:57623"/>
        <dbReference type="ChEBI" id="CHEBI:57912"/>
        <dbReference type="ChEBI" id="CHEBI:58209"/>
        <dbReference type="EC" id="2.5.1.34"/>
    </reaction>
</comment>
<comment type="pathway">
    <text>Alkaloid biosynthesis; ergot alkaloid biosynthesis.</text>
</comment>
<comment type="subunit">
    <text evidence="1">Homodimer.</text>
</comment>
<comment type="similarity">
    <text evidence="3">Belongs to the tryptophan dimethylallyltransferase family.</text>
</comment>
<comment type="sequence caution" evidence="3">
    <conflict type="erroneous gene model prediction">
        <sequence resource="EMBL-CDS" id="CCE30257"/>
    </conflict>
</comment>
<accession>Q9C141</accession>
<accession>M1VVX0</accession>
<protein>
    <recommendedName>
        <fullName>Tryptophan dimethylallyltransferase 2</fullName>
        <ecNumber>2.5.1.34</ecNumber>
    </recommendedName>
    <alternativeName>
        <fullName>4-dimethylallyltryptophan synthase 2</fullName>
    </alternativeName>
    <alternativeName>
        <fullName>All-trans-hexaprenyl-diphosphate synthase 2</fullName>
    </alternativeName>
    <alternativeName>
        <fullName>L-tryptophan dimethylallyl transferase 2</fullName>
        <shortName>DMATS 2</shortName>
    </alternativeName>
</protein>
<organism>
    <name type="scientific">Claviceps purpurea (strain 20.1)</name>
    <name type="common">Ergot fungus</name>
    <name type="synonym">Sphacelia segetum</name>
    <dbReference type="NCBI Taxonomy" id="1111077"/>
    <lineage>
        <taxon>Eukaryota</taxon>
        <taxon>Fungi</taxon>
        <taxon>Dikarya</taxon>
        <taxon>Ascomycota</taxon>
        <taxon>Pezizomycotina</taxon>
        <taxon>Sordariomycetes</taxon>
        <taxon>Hypocreomycetidae</taxon>
        <taxon>Hypocreales</taxon>
        <taxon>Clavicipitaceae</taxon>
        <taxon>Claviceps</taxon>
    </lineage>
</organism>
<evidence type="ECO:0000250" key="1"/>
<evidence type="ECO:0000250" key="2">
    <source>
        <dbReference type="UniProtKB" id="Q50EL0"/>
    </source>
</evidence>
<evidence type="ECO:0000305" key="3"/>
<reference key="1">
    <citation type="submission" date="2001-04" db="EMBL/GenBank/DDBJ databases">
        <title>Molecular analysis of dimethyl-allyl-tryptophan-synthase-genes.</title>
        <authorList>
            <person name="Arntz C."/>
            <person name="Tudzynski P."/>
        </authorList>
    </citation>
    <scope>NUCLEOTIDE SEQUENCE [GENOMIC DNA]</scope>
    <source>
        <strain>T5</strain>
    </source>
</reference>
<reference key="2">
    <citation type="journal article" date="2013" name="PLoS Genet.">
        <title>Plant-symbiotic fungi as chemical engineers: Multi-genome analysis of the Clavicipitaceae reveals dynamics of alkaloid loci.</title>
        <authorList>
            <person name="Schardl C.L."/>
            <person name="Young C.A."/>
            <person name="Hesse U."/>
            <person name="Amyotte S.G."/>
            <person name="Andreeva K."/>
            <person name="Calie P.J."/>
            <person name="Fleetwood D.J."/>
            <person name="Haws D.C."/>
            <person name="Moore N."/>
            <person name="Oeser B."/>
            <person name="Panaccione D.G."/>
            <person name="Schweri K.K."/>
            <person name="Voisey C.R."/>
            <person name="Farman M.L."/>
            <person name="Jaromczyk J.W."/>
            <person name="Roe B.A."/>
            <person name="O'Sullivan D.M."/>
            <person name="Scott B."/>
            <person name="Tudzynski P."/>
            <person name="An Z."/>
            <person name="Arnaoudova E.G."/>
            <person name="Bullock C.T."/>
            <person name="Charlton N.D."/>
            <person name="Chen L."/>
            <person name="Cox M."/>
            <person name="Dinkins R.D."/>
            <person name="Florea S."/>
            <person name="Glenn A.E."/>
            <person name="Gordon A."/>
            <person name="Gueldener U."/>
            <person name="Harris D.R."/>
            <person name="Hollin W."/>
            <person name="Jaromczyk J."/>
            <person name="Johnson R.D."/>
            <person name="Khan A.K."/>
            <person name="Leistner E."/>
            <person name="Leuchtmann A."/>
            <person name="Li C."/>
            <person name="Liu J."/>
            <person name="Liu J."/>
            <person name="Liu M."/>
            <person name="Mace W."/>
            <person name="Machado C."/>
            <person name="Nagabhyru P."/>
            <person name="Pan J."/>
            <person name="Schmid J."/>
            <person name="Sugawara K."/>
            <person name="Steiner U."/>
            <person name="Takach J.E."/>
            <person name="Tanaka E."/>
            <person name="Webb J.S."/>
            <person name="Wilson E.V."/>
            <person name="Wiseman J.L."/>
            <person name="Yoshida R."/>
            <person name="Zeng Z."/>
        </authorList>
    </citation>
    <scope>NUCLEOTIDE SEQUENCE [LARGE SCALE GENOMIC DNA]</scope>
    <source>
        <strain>20.1</strain>
    </source>
</reference>
<sequence length="448" mass="51521">MSTAKDPGNGVYEILSLIFDFPSNEQRLWWHSTAPMFAAMLDNAGYSVHDQYRHLSIFKTHIIPFLGVYPTKGQERWLSILTRCGLPLELSLNCTDSVVRYAYEPINEMTGTEKDPSNTLPIIGSVQKLAQIQAGIDLEWFSYFKDELTLDESESAILQDTELVKEQIKTQNKLALDLKESQFALKVYFYPHLKSIATGNSTHFLIFDSVFKLSQKHDSIQPAFQALCDYVSRRNDSSEVDQHRALHARLLSCDLIDPAKSRVKIYLQEQTVSLPAMEDLWTLGGRRVDASTMDGLDMLRELWSLLKVPTGHLEYPKGYMELGEIPNEQLPSLVNYTLHRNDPMPEPQVYFTVFGMNDAEISNALTIFLQRHGFADMAKKYRVFLQDSYPYHDFESLNYLHSLVSFSYRRNKPYLSVYLHTFETGRWPVVADSPISFDAYRRCDLSTK</sequence>
<keyword id="KW-0017">Alkaloid metabolism</keyword>
<keyword id="KW-1185">Reference proteome</keyword>
<keyword id="KW-0808">Transferase</keyword>
<dbReference type="EC" id="2.5.1.34"/>
<dbReference type="EMBL" id="AJ312753">
    <property type="protein sequence ID" value="CAC37396.1"/>
    <property type="molecule type" value="Genomic_DNA"/>
</dbReference>
<dbReference type="EMBL" id="CAGA01000020">
    <property type="protein sequence ID" value="CCE30257.1"/>
    <property type="status" value="ALT_SEQ"/>
    <property type="molecule type" value="Genomic_DNA"/>
</dbReference>
<dbReference type="SMR" id="Q9C141"/>
<dbReference type="STRING" id="1111077.Q9C141"/>
<dbReference type="eggNOG" id="ENOG502S2XP">
    <property type="taxonomic scope" value="Eukaryota"/>
</dbReference>
<dbReference type="HOGENOM" id="CLU_037431_0_0_1"/>
<dbReference type="OrthoDB" id="5392033at2759"/>
<dbReference type="UniPathway" id="UPA00327"/>
<dbReference type="Proteomes" id="UP000016801">
    <property type="component" value="Unassembled WGS sequence"/>
</dbReference>
<dbReference type="GO" id="GO:0050364">
    <property type="term" value="F:tryptophan dimethylallyltransferase activity"/>
    <property type="evidence" value="ECO:0007669"/>
    <property type="project" value="UniProtKB-EC"/>
</dbReference>
<dbReference type="GO" id="GO:0035837">
    <property type="term" value="P:ergot alkaloid biosynthetic process"/>
    <property type="evidence" value="ECO:0007669"/>
    <property type="project" value="InterPro"/>
</dbReference>
<dbReference type="CDD" id="cd13929">
    <property type="entry name" value="PT-DMATS_CymD"/>
    <property type="match status" value="1"/>
</dbReference>
<dbReference type="InterPro" id="IPR033964">
    <property type="entry name" value="Aro_prenylTrfase"/>
</dbReference>
<dbReference type="InterPro" id="IPR017795">
    <property type="entry name" value="Aro_prenylTrfase_DMATS"/>
</dbReference>
<dbReference type="InterPro" id="IPR012148">
    <property type="entry name" value="DMATS-type_fun"/>
</dbReference>
<dbReference type="InterPro" id="IPR017796">
    <property type="entry name" value="Trp_dimethylallylTrfase"/>
</dbReference>
<dbReference type="NCBIfam" id="TIGR03429">
    <property type="entry name" value="arom_pren_DMATS"/>
    <property type="match status" value="1"/>
</dbReference>
<dbReference type="NCBIfam" id="TIGR03430">
    <property type="entry name" value="trp_dimet_allyl"/>
    <property type="match status" value="1"/>
</dbReference>
<dbReference type="PANTHER" id="PTHR40627">
    <property type="entry name" value="INDOLE PRENYLTRANSFERASE TDIB-RELATED"/>
    <property type="match status" value="1"/>
</dbReference>
<dbReference type="PANTHER" id="PTHR40627:SF3">
    <property type="entry name" value="PRENYLTRANSFERASE ASQH2-RELATED"/>
    <property type="match status" value="1"/>
</dbReference>
<dbReference type="Pfam" id="PF11991">
    <property type="entry name" value="Trp_DMAT"/>
    <property type="match status" value="1"/>
</dbReference>
<dbReference type="PIRSF" id="PIRSF000509">
    <property type="entry name" value="Trp_DMAT"/>
    <property type="match status" value="1"/>
</dbReference>
<dbReference type="SFLD" id="SFLDS00036">
    <property type="entry name" value="Aromatic_Prenyltransferase"/>
    <property type="match status" value="1"/>
</dbReference>
<dbReference type="SFLD" id="SFLDG01162">
    <property type="entry name" value="I"/>
    <property type="match status" value="1"/>
</dbReference>